<reference key="1">
    <citation type="journal article" date="1998" name="Arch. Microbiol.">
        <title>Propionyl-CoA carboxylase of Myxococcus xanthus: catalytic properties and function in developing cells.</title>
        <authorList>
            <person name="Kimura Y."/>
            <person name="Kojyo T."/>
            <person name="Kimura I."/>
            <person name="Sato M."/>
        </authorList>
    </citation>
    <scope>PROTEIN SEQUENCE</scope>
    <scope>FUNCTION</scope>
    <scope>CATALYTIC ACTIVITY</scope>
    <scope>PATHWAY</scope>
    <source>
        <strain>ATCC 25232 / DSM 16526 / CIP 107069 / KCTC 72774 / NBRC 13542 / NCIMB 9412 / FB</strain>
    </source>
</reference>
<feature type="chain" id="PRO_0000146818" description="Propionyl-CoA carboxylase alpha chain">
    <location>
        <begin position="1"/>
        <end position="30" status="greater than"/>
    </location>
</feature>
<feature type="domain" description="Biotin carboxylation">
    <location>
        <begin position="1"/>
        <end position="30" status="greater than"/>
    </location>
</feature>
<feature type="non-terminal residue">
    <location>
        <position position="30"/>
    </location>
</feature>
<accession>P81185</accession>
<comment type="function">
    <text evidence="1 5">This is one of the 2 subunits of the biotin-dependent propionyl-CoA carboxylase (PCC), the enzyme catalyzing the carboxylation of propionyl-CoA/propanoyl-CoA to D-methylmalonyl-CoA/(S)-methylmalonyl-CoA (PubMed:9683657). Within the holoenzyme, the alpha subunit catalyzes the ATP-dependent carboxylation of the biotin carried by the biotin carboxyl carrier (BCC) domain, while the beta subunit then transfers the carboxyl group from carboxylated biotin to propionyl-CoA (By similarity). Propionyl-CoA carboxylase also carboxylates acetyl-CoA, butyryl-CoA and succinyl-CoA (PubMed:9683657).</text>
</comment>
<comment type="catalytic activity">
    <reaction evidence="5">
        <text>propanoyl-CoA + hydrogencarbonate + ATP = (S)-methylmalonyl-CoA + ADP + phosphate + H(+)</text>
        <dbReference type="Rhea" id="RHEA:23720"/>
        <dbReference type="ChEBI" id="CHEBI:15378"/>
        <dbReference type="ChEBI" id="CHEBI:17544"/>
        <dbReference type="ChEBI" id="CHEBI:30616"/>
        <dbReference type="ChEBI" id="CHEBI:43474"/>
        <dbReference type="ChEBI" id="CHEBI:57327"/>
        <dbReference type="ChEBI" id="CHEBI:57392"/>
        <dbReference type="ChEBI" id="CHEBI:456216"/>
        <dbReference type="EC" id="6.4.1.3"/>
    </reaction>
    <physiologicalReaction direction="left-to-right" evidence="7">
        <dbReference type="Rhea" id="RHEA:23721"/>
    </physiologicalReaction>
</comment>
<comment type="cofactor">
    <cofactor evidence="2 3">
        <name>Mg(2+)</name>
        <dbReference type="ChEBI" id="CHEBI:18420"/>
    </cofactor>
    <cofactor evidence="2 3">
        <name>Mn(2+)</name>
        <dbReference type="ChEBI" id="CHEBI:29035"/>
    </cofactor>
    <text evidence="2 3">Binds 2 magnesium or manganese ions per subunit.</text>
</comment>
<comment type="cofactor">
    <cofactor evidence="4">
        <name>biotin</name>
        <dbReference type="ChEBI" id="CHEBI:57586"/>
    </cofactor>
</comment>
<comment type="biophysicochemical properties">
    <kinetics>
        <KM evidence="5">0.2 mM for acetyl-CoA</KM>
        <KM evidence="5">0.2 mM for butyryl-CoA</KM>
        <KM evidence="5">0.03 mM for propionyl-CoA</KM>
        <KM evidence="5">1 mM for succinyl-CoA</KM>
    </kinetics>
    <phDependence>
        <text evidence="5">Optimum pH is 7.0-7.5.</text>
    </phDependence>
    <temperatureDependence>
        <text evidence="5">Optimum temperature is 25-30 degrees Celsius.</text>
    </temperatureDependence>
</comment>
<comment type="pathway">
    <text evidence="7">Metabolic intermediate metabolism; propanoyl-CoA degradation; succinyl-CoA from propanoyl-CoA: step 1/3.</text>
</comment>
<comment type="subunit">
    <text evidence="6">Dodecamer composed of six biotin-containing alpha subunits and six beta subunits.</text>
</comment>
<comment type="domain">
    <text evidence="1">Consists of an N-terminal biotin carboxylation/carboxylase (BC) domain that catalyzes the transient carboxylation of the biotin covalently attached to the C-terminal biotinyl-binding/biotin carboxyl carrier (BCC) domain.</text>
</comment>
<comment type="miscellaneous">
    <text evidence="5">During development the activity increased gradually with the maximum during the sporulation stage.</text>
</comment>
<sequence>PKIRKVLVANRGEIAIRVMRTXKELGIATV</sequence>
<proteinExistence type="evidence at protein level"/>
<name>PCCA_MYXXA</name>
<evidence type="ECO:0000250" key="1">
    <source>
        <dbReference type="UniProtKB" id="Q5LUF3"/>
    </source>
</evidence>
<evidence type="ECO:0000255" key="2">
    <source>
        <dbReference type="PROSITE-ProRule" id="PRU00409"/>
    </source>
</evidence>
<evidence type="ECO:0000255" key="3">
    <source>
        <dbReference type="PROSITE-ProRule" id="PRU00969"/>
    </source>
</evidence>
<evidence type="ECO:0000255" key="4">
    <source>
        <dbReference type="PROSITE-ProRule" id="PRU01066"/>
    </source>
</evidence>
<evidence type="ECO:0000269" key="5">
    <source>
    </source>
</evidence>
<evidence type="ECO:0000305" key="6"/>
<evidence type="ECO:0000305" key="7">
    <source>
    </source>
</evidence>
<dbReference type="EC" id="6.4.1.3" evidence="5"/>
<dbReference type="UniPathway" id="UPA00945">
    <property type="reaction ID" value="UER00908"/>
</dbReference>
<dbReference type="GO" id="GO:0005524">
    <property type="term" value="F:ATP binding"/>
    <property type="evidence" value="ECO:0007669"/>
    <property type="project" value="UniProtKB-KW"/>
</dbReference>
<dbReference type="GO" id="GO:0004658">
    <property type="term" value="F:propionyl-CoA carboxylase activity"/>
    <property type="evidence" value="ECO:0007669"/>
    <property type="project" value="UniProtKB-EC"/>
</dbReference>
<dbReference type="GO" id="GO:0006633">
    <property type="term" value="P:fatty acid biosynthetic process"/>
    <property type="evidence" value="ECO:0007669"/>
    <property type="project" value="UniProtKB-KW"/>
</dbReference>
<dbReference type="Gene3D" id="3.40.50.20">
    <property type="match status" value="1"/>
</dbReference>
<dbReference type="InterPro" id="IPR005481">
    <property type="entry name" value="BC-like_N"/>
</dbReference>
<dbReference type="InterPro" id="IPR011764">
    <property type="entry name" value="Biotin_carboxylation_dom"/>
</dbReference>
<dbReference type="InterPro" id="IPR016185">
    <property type="entry name" value="PreATP-grasp_dom_sf"/>
</dbReference>
<dbReference type="Pfam" id="PF00289">
    <property type="entry name" value="Biotin_carb_N"/>
    <property type="match status" value="1"/>
</dbReference>
<dbReference type="SUPFAM" id="SSF52440">
    <property type="entry name" value="PreATP-grasp domain"/>
    <property type="match status" value="1"/>
</dbReference>
<dbReference type="PROSITE" id="PS50979">
    <property type="entry name" value="BC"/>
    <property type="match status" value="1"/>
</dbReference>
<protein>
    <recommendedName>
        <fullName>Propionyl-CoA carboxylase alpha chain</fullName>
        <shortName>PCCase</shortName>
        <ecNumber evidence="5">6.4.1.3</ecNumber>
    </recommendedName>
    <alternativeName>
        <fullName>Propanoyl-CoA:carbon dioxide ligase</fullName>
    </alternativeName>
</protein>
<organism>
    <name type="scientific">Myxococcus xanthus</name>
    <dbReference type="NCBI Taxonomy" id="34"/>
    <lineage>
        <taxon>Bacteria</taxon>
        <taxon>Pseudomonadati</taxon>
        <taxon>Myxococcota</taxon>
        <taxon>Myxococcia</taxon>
        <taxon>Myxococcales</taxon>
        <taxon>Cystobacterineae</taxon>
        <taxon>Myxococcaceae</taxon>
        <taxon>Myxococcus</taxon>
    </lineage>
</organism>
<keyword id="KW-0067">ATP-binding</keyword>
<keyword id="KW-0092">Biotin</keyword>
<keyword id="KW-0903">Direct protein sequencing</keyword>
<keyword id="KW-0275">Fatty acid biosynthesis</keyword>
<keyword id="KW-0276">Fatty acid metabolism</keyword>
<keyword id="KW-0436">Ligase</keyword>
<keyword id="KW-0444">Lipid biosynthesis</keyword>
<keyword id="KW-0443">Lipid metabolism</keyword>
<keyword id="KW-0547">Nucleotide-binding</keyword>